<name>FDL22_ARATH</name>
<keyword id="KW-0433">Leucine-rich repeat</keyword>
<keyword id="KW-1185">Reference proteome</keyword>
<keyword id="KW-0677">Repeat</keyword>
<proteinExistence type="predicted"/>
<protein>
    <recommendedName>
        <fullName>Putative F-box/FBD/LRR-repeat protein At3g56780</fullName>
    </recommendedName>
</protein>
<dbReference type="EMBL" id="AL390921">
    <property type="protein sequence ID" value="CAC00741.1"/>
    <property type="molecule type" value="Genomic_DNA"/>
</dbReference>
<dbReference type="EMBL" id="CP002686">
    <property type="protein sequence ID" value="AEE79565.1"/>
    <property type="molecule type" value="Genomic_DNA"/>
</dbReference>
<dbReference type="PIR" id="T51266">
    <property type="entry name" value="T51266"/>
</dbReference>
<dbReference type="RefSeq" id="NP_191237.1">
    <property type="nucleotide sequence ID" value="NM_115537.1"/>
</dbReference>
<dbReference type="PaxDb" id="3702-AT3G56780.1"/>
<dbReference type="EnsemblPlants" id="AT3G56780.1">
    <property type="protein sequence ID" value="AT3G56780.1"/>
    <property type="gene ID" value="AT3G56780"/>
</dbReference>
<dbReference type="GeneID" id="824845"/>
<dbReference type="Gramene" id="AT3G56780.1">
    <property type="protein sequence ID" value="AT3G56780.1"/>
    <property type="gene ID" value="AT3G56780"/>
</dbReference>
<dbReference type="KEGG" id="ath:AT3G56780"/>
<dbReference type="Araport" id="AT3G56780"/>
<dbReference type="TAIR" id="AT3G56780"/>
<dbReference type="HOGENOM" id="CLU_010721_1_2_1"/>
<dbReference type="InParanoid" id="Q9LES9"/>
<dbReference type="PhylomeDB" id="Q9LES9"/>
<dbReference type="PRO" id="PR:Q9LES9"/>
<dbReference type="Proteomes" id="UP000006548">
    <property type="component" value="Chromosome 3"/>
</dbReference>
<dbReference type="ExpressionAtlas" id="Q9LES9">
    <property type="expression patterns" value="baseline and differential"/>
</dbReference>
<dbReference type="CDD" id="cd22160">
    <property type="entry name" value="F-box_AtFBL13-like"/>
    <property type="match status" value="1"/>
</dbReference>
<dbReference type="Gene3D" id="1.20.1280.50">
    <property type="match status" value="1"/>
</dbReference>
<dbReference type="Gene3D" id="3.80.10.10">
    <property type="entry name" value="Ribonuclease Inhibitor"/>
    <property type="match status" value="1"/>
</dbReference>
<dbReference type="InterPro" id="IPR036047">
    <property type="entry name" value="F-box-like_dom_sf"/>
</dbReference>
<dbReference type="InterPro" id="IPR053781">
    <property type="entry name" value="F-box_AtFBL13-like"/>
</dbReference>
<dbReference type="InterPro" id="IPR001810">
    <property type="entry name" value="F-box_dom"/>
</dbReference>
<dbReference type="InterPro" id="IPR006566">
    <property type="entry name" value="FBD"/>
</dbReference>
<dbReference type="InterPro" id="IPR050232">
    <property type="entry name" value="FBL13/AtMIF1-like"/>
</dbReference>
<dbReference type="InterPro" id="IPR032675">
    <property type="entry name" value="LRR_dom_sf"/>
</dbReference>
<dbReference type="InterPro" id="IPR055411">
    <property type="entry name" value="LRR_FXL15/At3g58940/PEG3-like"/>
</dbReference>
<dbReference type="InterPro" id="IPR013101">
    <property type="entry name" value="LRR_PRU1-like"/>
</dbReference>
<dbReference type="PANTHER" id="PTHR31900:SF34">
    <property type="entry name" value="EMB|CAB62440.1-RELATED"/>
    <property type="match status" value="1"/>
</dbReference>
<dbReference type="PANTHER" id="PTHR31900">
    <property type="entry name" value="F-BOX/RNI SUPERFAMILY PROTEIN-RELATED"/>
    <property type="match status" value="1"/>
</dbReference>
<dbReference type="Pfam" id="PF00646">
    <property type="entry name" value="F-box"/>
    <property type="match status" value="1"/>
</dbReference>
<dbReference type="Pfam" id="PF08387">
    <property type="entry name" value="FBD"/>
    <property type="match status" value="1"/>
</dbReference>
<dbReference type="Pfam" id="PF07723">
    <property type="entry name" value="LRR_2"/>
    <property type="match status" value="1"/>
</dbReference>
<dbReference type="Pfam" id="PF24758">
    <property type="entry name" value="LRR_At5g56370"/>
    <property type="match status" value="1"/>
</dbReference>
<dbReference type="SMART" id="SM00256">
    <property type="entry name" value="FBOX"/>
    <property type="match status" value="1"/>
</dbReference>
<dbReference type="SUPFAM" id="SSF81383">
    <property type="entry name" value="F-box domain"/>
    <property type="match status" value="1"/>
</dbReference>
<dbReference type="SUPFAM" id="SSF52047">
    <property type="entry name" value="RNI-like"/>
    <property type="match status" value="1"/>
</dbReference>
<dbReference type="PROSITE" id="PS50181">
    <property type="entry name" value="FBOX"/>
    <property type="match status" value="1"/>
</dbReference>
<accession>Q9LES9</accession>
<sequence length="431" mass="49563">MTKKVCSCINELPDDLILKILSFVSTKHVVVTSLLSKKWKSLWTRVPILKYDVRDHTRFERFLDKSLFSHQSHVLESLHVELSVTLWNKDIGPWIRTALHHHHCHLRELEIDACIVHTVLPPELFTCKTLVVLKLKGIVIDVEAPLTTVSLPSLKTLHIDHSSLFDFGSLQMLLSNCNFITDLMVIRESRFFFAEYDVSWCKTLMALKLEGLKDVISISSSSAVCLPLLKTLHVARMEDFNNDSFCRLLSNCPVLSDLTLEEKTSDVLLNLDIDMPYLQRLSIITRVDADSKHIFSLMKNYTRKLAIIAPSFKYFSIQELAYASRYRYIVRVRLGVPSKLEDASTFSRIVHLELSICSERSVEMLVDLLLCFTKLVVLKLEHVYLLTPLGRWEPPSLVPECLLSSLEALEWKGYTGRYGDKDLRSNRLKRT</sequence>
<evidence type="ECO:0000255" key="1">
    <source>
        <dbReference type="PROSITE-ProRule" id="PRU00080"/>
    </source>
</evidence>
<feature type="chain" id="PRO_0000283115" description="Putative F-box/FBD/LRR-repeat protein At3g56780">
    <location>
        <begin position="1"/>
        <end position="431"/>
    </location>
</feature>
<feature type="domain" description="F-box" evidence="1">
    <location>
        <begin position="6"/>
        <end position="62"/>
    </location>
</feature>
<feature type="repeat" description="LRR 1">
    <location>
        <begin position="56"/>
        <end position="82"/>
    </location>
</feature>
<feature type="repeat" description="LRR 2">
    <location>
        <begin position="88"/>
        <end position="113"/>
    </location>
</feature>
<feature type="repeat" description="LRR 3">
    <location>
        <begin position="135"/>
        <end position="161"/>
    </location>
</feature>
<feature type="repeat" description="LRR 4">
    <location>
        <begin position="162"/>
        <end position="187"/>
    </location>
</feature>
<feature type="repeat" description="LRR 5">
    <location>
        <begin position="209"/>
        <end position="236"/>
    </location>
</feature>
<feature type="repeat" description="LRR 6">
    <location>
        <begin position="237"/>
        <end position="262"/>
    </location>
</feature>
<feature type="repeat" description="LRR 7">
    <location>
        <begin position="264"/>
        <end position="285"/>
    </location>
</feature>
<feature type="repeat" description="LRR 8">
    <location>
        <begin position="357"/>
        <end position="382"/>
    </location>
</feature>
<feature type="domain" description="FBD">
    <location>
        <begin position="391"/>
        <end position="423"/>
    </location>
</feature>
<reference key="1">
    <citation type="journal article" date="2000" name="Nature">
        <title>Sequence and analysis of chromosome 3 of the plant Arabidopsis thaliana.</title>
        <authorList>
            <person name="Salanoubat M."/>
            <person name="Lemcke K."/>
            <person name="Rieger M."/>
            <person name="Ansorge W."/>
            <person name="Unseld M."/>
            <person name="Fartmann B."/>
            <person name="Valle G."/>
            <person name="Bloecker H."/>
            <person name="Perez-Alonso M."/>
            <person name="Obermaier B."/>
            <person name="Delseny M."/>
            <person name="Boutry M."/>
            <person name="Grivell L.A."/>
            <person name="Mache R."/>
            <person name="Puigdomenech P."/>
            <person name="De Simone V."/>
            <person name="Choisne N."/>
            <person name="Artiguenave F."/>
            <person name="Robert C."/>
            <person name="Brottier P."/>
            <person name="Wincker P."/>
            <person name="Cattolico L."/>
            <person name="Weissenbach J."/>
            <person name="Saurin W."/>
            <person name="Quetier F."/>
            <person name="Schaefer M."/>
            <person name="Mueller-Auer S."/>
            <person name="Gabel C."/>
            <person name="Fuchs M."/>
            <person name="Benes V."/>
            <person name="Wurmbach E."/>
            <person name="Drzonek H."/>
            <person name="Erfle H."/>
            <person name="Jordan N."/>
            <person name="Bangert S."/>
            <person name="Wiedelmann R."/>
            <person name="Kranz H."/>
            <person name="Voss H."/>
            <person name="Holland R."/>
            <person name="Brandt P."/>
            <person name="Nyakatura G."/>
            <person name="Vezzi A."/>
            <person name="D'Angelo M."/>
            <person name="Pallavicini A."/>
            <person name="Toppo S."/>
            <person name="Simionati B."/>
            <person name="Conrad A."/>
            <person name="Hornischer K."/>
            <person name="Kauer G."/>
            <person name="Loehnert T.-H."/>
            <person name="Nordsiek G."/>
            <person name="Reichelt J."/>
            <person name="Scharfe M."/>
            <person name="Schoen O."/>
            <person name="Bargues M."/>
            <person name="Terol J."/>
            <person name="Climent J."/>
            <person name="Navarro P."/>
            <person name="Collado C."/>
            <person name="Perez-Perez A."/>
            <person name="Ottenwaelder B."/>
            <person name="Duchemin D."/>
            <person name="Cooke R."/>
            <person name="Laudie M."/>
            <person name="Berger-Llauro C."/>
            <person name="Purnelle B."/>
            <person name="Masuy D."/>
            <person name="de Haan M."/>
            <person name="Maarse A.C."/>
            <person name="Alcaraz J.-P."/>
            <person name="Cottet A."/>
            <person name="Casacuberta E."/>
            <person name="Monfort A."/>
            <person name="Argiriou A."/>
            <person name="Flores M."/>
            <person name="Liguori R."/>
            <person name="Vitale D."/>
            <person name="Mannhaupt G."/>
            <person name="Haase D."/>
            <person name="Schoof H."/>
            <person name="Rudd S."/>
            <person name="Zaccaria P."/>
            <person name="Mewes H.-W."/>
            <person name="Mayer K.F.X."/>
            <person name="Kaul S."/>
            <person name="Town C.D."/>
            <person name="Koo H.L."/>
            <person name="Tallon L.J."/>
            <person name="Jenkins J."/>
            <person name="Rooney T."/>
            <person name="Rizzo M."/>
            <person name="Walts A."/>
            <person name="Utterback T."/>
            <person name="Fujii C.Y."/>
            <person name="Shea T.P."/>
            <person name="Creasy T.H."/>
            <person name="Haas B."/>
            <person name="Maiti R."/>
            <person name="Wu D."/>
            <person name="Peterson J."/>
            <person name="Van Aken S."/>
            <person name="Pai G."/>
            <person name="Militscher J."/>
            <person name="Sellers P."/>
            <person name="Gill J.E."/>
            <person name="Feldblyum T.V."/>
            <person name="Preuss D."/>
            <person name="Lin X."/>
            <person name="Nierman W.C."/>
            <person name="Salzberg S.L."/>
            <person name="White O."/>
            <person name="Venter J.C."/>
            <person name="Fraser C.M."/>
            <person name="Kaneko T."/>
            <person name="Nakamura Y."/>
            <person name="Sato S."/>
            <person name="Kato T."/>
            <person name="Asamizu E."/>
            <person name="Sasamoto S."/>
            <person name="Kimura T."/>
            <person name="Idesawa K."/>
            <person name="Kawashima K."/>
            <person name="Kishida Y."/>
            <person name="Kiyokawa C."/>
            <person name="Kohara M."/>
            <person name="Matsumoto M."/>
            <person name="Matsuno A."/>
            <person name="Muraki A."/>
            <person name="Nakayama S."/>
            <person name="Nakazaki N."/>
            <person name="Shinpo S."/>
            <person name="Takeuchi C."/>
            <person name="Wada T."/>
            <person name="Watanabe A."/>
            <person name="Yamada M."/>
            <person name="Yasuda M."/>
            <person name="Tabata S."/>
        </authorList>
    </citation>
    <scope>NUCLEOTIDE SEQUENCE [LARGE SCALE GENOMIC DNA]</scope>
    <source>
        <strain>cv. Columbia</strain>
    </source>
</reference>
<reference key="2">
    <citation type="journal article" date="2017" name="Plant J.">
        <title>Araport11: a complete reannotation of the Arabidopsis thaliana reference genome.</title>
        <authorList>
            <person name="Cheng C.Y."/>
            <person name="Krishnakumar V."/>
            <person name="Chan A.P."/>
            <person name="Thibaud-Nissen F."/>
            <person name="Schobel S."/>
            <person name="Town C.D."/>
        </authorList>
    </citation>
    <scope>GENOME REANNOTATION</scope>
    <source>
        <strain>cv. Columbia</strain>
    </source>
</reference>
<gene>
    <name type="ordered locus">At3g56780</name>
    <name type="ORF">T8M16.110</name>
</gene>
<organism>
    <name type="scientific">Arabidopsis thaliana</name>
    <name type="common">Mouse-ear cress</name>
    <dbReference type="NCBI Taxonomy" id="3702"/>
    <lineage>
        <taxon>Eukaryota</taxon>
        <taxon>Viridiplantae</taxon>
        <taxon>Streptophyta</taxon>
        <taxon>Embryophyta</taxon>
        <taxon>Tracheophyta</taxon>
        <taxon>Spermatophyta</taxon>
        <taxon>Magnoliopsida</taxon>
        <taxon>eudicotyledons</taxon>
        <taxon>Gunneridae</taxon>
        <taxon>Pentapetalae</taxon>
        <taxon>rosids</taxon>
        <taxon>malvids</taxon>
        <taxon>Brassicales</taxon>
        <taxon>Brassicaceae</taxon>
        <taxon>Camelineae</taxon>
        <taxon>Arabidopsis</taxon>
    </lineage>
</organism>